<evidence type="ECO:0000250" key="1">
    <source>
        <dbReference type="UniProtKB" id="Q6NTE8"/>
    </source>
</evidence>
<evidence type="ECO:0000256" key="2">
    <source>
        <dbReference type="SAM" id="MobiDB-lite"/>
    </source>
</evidence>
<evidence type="ECO:0000305" key="3"/>
<evidence type="ECO:0000312" key="4">
    <source>
        <dbReference type="MGI" id="MGI:1915317"/>
    </source>
</evidence>
<organism>
    <name type="scientific">Mus musculus</name>
    <name type="common">Mouse</name>
    <dbReference type="NCBI Taxonomy" id="10090"/>
    <lineage>
        <taxon>Eukaryota</taxon>
        <taxon>Metazoa</taxon>
        <taxon>Chordata</taxon>
        <taxon>Craniata</taxon>
        <taxon>Vertebrata</taxon>
        <taxon>Euteleostomi</taxon>
        <taxon>Mammalia</taxon>
        <taxon>Eutheria</taxon>
        <taxon>Euarchontoglires</taxon>
        <taxon>Glires</taxon>
        <taxon>Rodentia</taxon>
        <taxon>Myomorpha</taxon>
        <taxon>Muroidea</taxon>
        <taxon>Muridae</taxon>
        <taxon>Murinae</taxon>
        <taxon>Mus</taxon>
        <taxon>Mus</taxon>
    </lineage>
</organism>
<feature type="chain" id="PRO_0000326120" description="MRN complex-interacting protein">
    <location>
        <begin position="1"/>
        <end position="335"/>
    </location>
</feature>
<feature type="region of interest" description="Disordered" evidence="2">
    <location>
        <begin position="75"/>
        <end position="102"/>
    </location>
</feature>
<feature type="region of interest" description="Disordered" evidence="2">
    <location>
        <begin position="118"/>
        <end position="194"/>
    </location>
</feature>
<feature type="region of interest" description="Necessary for the association with the MRN complex" evidence="1">
    <location>
        <begin position="203"/>
        <end position="230"/>
    </location>
</feature>
<feature type="region of interest" description="Disordered" evidence="2">
    <location>
        <begin position="273"/>
        <end position="335"/>
    </location>
</feature>
<feature type="short sequence motif" description="Nuclear localization signal (NLS)" evidence="1">
    <location>
        <begin position="145"/>
        <end position="148"/>
    </location>
</feature>
<feature type="compositionally biased region" description="Polar residues" evidence="2">
    <location>
        <begin position="129"/>
        <end position="142"/>
    </location>
</feature>
<feature type="compositionally biased region" description="Polar residues" evidence="2">
    <location>
        <begin position="177"/>
        <end position="194"/>
    </location>
</feature>
<feature type="compositionally biased region" description="Basic and acidic residues" evidence="2">
    <location>
        <begin position="286"/>
        <end position="297"/>
    </location>
</feature>
<feature type="modified residue" description="Phosphoserine" evidence="1">
    <location>
        <position position="100"/>
    </location>
</feature>
<feature type="sequence conflict" description="In Ref. 2; BAB31698." evidence="3" ref="2">
    <original>E</original>
    <variation>G</variation>
    <location>
        <position position="294"/>
    </location>
</feature>
<name>MRNIP_MOUSE</name>
<protein>
    <recommendedName>
        <fullName evidence="4">MRN complex-interacting protein</fullName>
    </recommendedName>
    <alternativeName>
        <fullName evidence="1">MRN-interacting protein</fullName>
    </alternativeName>
</protein>
<accession>Q9D1F5</accession>
<accession>Q9CX85</accession>
<keyword id="KW-0227">DNA damage</keyword>
<keyword id="KW-0234">DNA repair</keyword>
<keyword id="KW-0539">Nucleus</keyword>
<keyword id="KW-0597">Phosphoprotein</keyword>
<keyword id="KW-1185">Reference proteome</keyword>
<proteinExistence type="evidence at transcript level"/>
<sequence>MAPAQQSRVLRCCSCHIFQAHQVKKSLKWTCKACGEKQSFVRAYGEGSGADCRRHVQKLNLLQGQVSELSLRSVEEAVNGSEEENAGPLQAEAGSQQAPSKPLESRWLKYLDKGCEDQELDRGRPALKTQLSTSAERPSSPAQPRKRKWNQRTGQPAHSLHGQGVDSVEDNFEHQDSTGLFGTEQQGTSPALSTANHTRELGFPRWKLPSPVTQVNAPSSKWARFLLAPGNSPQVDEKPSPLQEATMLADLAQGTVENKTPVEGHFSRAPAIRPPQAIHTTTPQLDRPDRKTREQPRDMGTPRADGRPLAQGTQKAPPLQLHNLFTTGEDFDDDL</sequence>
<reference key="1">
    <citation type="journal article" date="2005" name="Science">
        <title>The transcriptional landscape of the mammalian genome.</title>
        <authorList>
            <person name="Carninci P."/>
            <person name="Kasukawa T."/>
            <person name="Katayama S."/>
            <person name="Gough J."/>
            <person name="Frith M.C."/>
            <person name="Maeda N."/>
            <person name="Oyama R."/>
            <person name="Ravasi T."/>
            <person name="Lenhard B."/>
            <person name="Wells C."/>
            <person name="Kodzius R."/>
            <person name="Shimokawa K."/>
            <person name="Bajic V.B."/>
            <person name="Brenner S.E."/>
            <person name="Batalov S."/>
            <person name="Forrest A.R."/>
            <person name="Zavolan M."/>
            <person name="Davis M.J."/>
            <person name="Wilming L.G."/>
            <person name="Aidinis V."/>
            <person name="Allen J.E."/>
            <person name="Ambesi-Impiombato A."/>
            <person name="Apweiler R."/>
            <person name="Aturaliya R.N."/>
            <person name="Bailey T.L."/>
            <person name="Bansal M."/>
            <person name="Baxter L."/>
            <person name="Beisel K.W."/>
            <person name="Bersano T."/>
            <person name="Bono H."/>
            <person name="Chalk A.M."/>
            <person name="Chiu K.P."/>
            <person name="Choudhary V."/>
            <person name="Christoffels A."/>
            <person name="Clutterbuck D.R."/>
            <person name="Crowe M.L."/>
            <person name="Dalla E."/>
            <person name="Dalrymple B.P."/>
            <person name="de Bono B."/>
            <person name="Della Gatta G."/>
            <person name="di Bernardo D."/>
            <person name="Down T."/>
            <person name="Engstrom P."/>
            <person name="Fagiolini M."/>
            <person name="Faulkner G."/>
            <person name="Fletcher C.F."/>
            <person name="Fukushima T."/>
            <person name="Furuno M."/>
            <person name="Futaki S."/>
            <person name="Gariboldi M."/>
            <person name="Georgii-Hemming P."/>
            <person name="Gingeras T.R."/>
            <person name="Gojobori T."/>
            <person name="Green R.E."/>
            <person name="Gustincich S."/>
            <person name="Harbers M."/>
            <person name="Hayashi Y."/>
            <person name="Hensch T.K."/>
            <person name="Hirokawa N."/>
            <person name="Hill D."/>
            <person name="Huminiecki L."/>
            <person name="Iacono M."/>
            <person name="Ikeo K."/>
            <person name="Iwama A."/>
            <person name="Ishikawa T."/>
            <person name="Jakt M."/>
            <person name="Kanapin A."/>
            <person name="Katoh M."/>
            <person name="Kawasawa Y."/>
            <person name="Kelso J."/>
            <person name="Kitamura H."/>
            <person name="Kitano H."/>
            <person name="Kollias G."/>
            <person name="Krishnan S.P."/>
            <person name="Kruger A."/>
            <person name="Kummerfeld S.K."/>
            <person name="Kurochkin I.V."/>
            <person name="Lareau L.F."/>
            <person name="Lazarevic D."/>
            <person name="Lipovich L."/>
            <person name="Liu J."/>
            <person name="Liuni S."/>
            <person name="McWilliam S."/>
            <person name="Madan Babu M."/>
            <person name="Madera M."/>
            <person name="Marchionni L."/>
            <person name="Matsuda H."/>
            <person name="Matsuzawa S."/>
            <person name="Miki H."/>
            <person name="Mignone F."/>
            <person name="Miyake S."/>
            <person name="Morris K."/>
            <person name="Mottagui-Tabar S."/>
            <person name="Mulder N."/>
            <person name="Nakano N."/>
            <person name="Nakauchi H."/>
            <person name="Ng P."/>
            <person name="Nilsson R."/>
            <person name="Nishiguchi S."/>
            <person name="Nishikawa S."/>
            <person name="Nori F."/>
            <person name="Ohara O."/>
            <person name="Okazaki Y."/>
            <person name="Orlando V."/>
            <person name="Pang K.C."/>
            <person name="Pavan W.J."/>
            <person name="Pavesi G."/>
            <person name="Pesole G."/>
            <person name="Petrovsky N."/>
            <person name="Piazza S."/>
            <person name="Reed J."/>
            <person name="Reid J.F."/>
            <person name="Ring B.Z."/>
            <person name="Ringwald M."/>
            <person name="Rost B."/>
            <person name="Ruan Y."/>
            <person name="Salzberg S.L."/>
            <person name="Sandelin A."/>
            <person name="Schneider C."/>
            <person name="Schoenbach C."/>
            <person name="Sekiguchi K."/>
            <person name="Semple C.A."/>
            <person name="Seno S."/>
            <person name="Sessa L."/>
            <person name="Sheng Y."/>
            <person name="Shibata Y."/>
            <person name="Shimada H."/>
            <person name="Shimada K."/>
            <person name="Silva D."/>
            <person name="Sinclair B."/>
            <person name="Sperling S."/>
            <person name="Stupka E."/>
            <person name="Sugiura K."/>
            <person name="Sultana R."/>
            <person name="Takenaka Y."/>
            <person name="Taki K."/>
            <person name="Tammoja K."/>
            <person name="Tan S.L."/>
            <person name="Tang S."/>
            <person name="Taylor M.S."/>
            <person name="Tegner J."/>
            <person name="Teichmann S.A."/>
            <person name="Ueda H.R."/>
            <person name="van Nimwegen E."/>
            <person name="Verardo R."/>
            <person name="Wei C.L."/>
            <person name="Yagi K."/>
            <person name="Yamanishi H."/>
            <person name="Zabarovsky E."/>
            <person name="Zhu S."/>
            <person name="Zimmer A."/>
            <person name="Hide W."/>
            <person name="Bult C."/>
            <person name="Grimmond S.M."/>
            <person name="Teasdale R.D."/>
            <person name="Liu E.T."/>
            <person name="Brusic V."/>
            <person name="Quackenbush J."/>
            <person name="Wahlestedt C."/>
            <person name="Mattick J.S."/>
            <person name="Hume D.A."/>
            <person name="Kai C."/>
            <person name="Sasaki D."/>
            <person name="Tomaru Y."/>
            <person name="Fukuda S."/>
            <person name="Kanamori-Katayama M."/>
            <person name="Suzuki M."/>
            <person name="Aoki J."/>
            <person name="Arakawa T."/>
            <person name="Iida J."/>
            <person name="Imamura K."/>
            <person name="Itoh M."/>
            <person name="Kato T."/>
            <person name="Kawaji H."/>
            <person name="Kawagashira N."/>
            <person name="Kawashima T."/>
            <person name="Kojima M."/>
            <person name="Kondo S."/>
            <person name="Konno H."/>
            <person name="Nakano K."/>
            <person name="Ninomiya N."/>
            <person name="Nishio T."/>
            <person name="Okada M."/>
            <person name="Plessy C."/>
            <person name="Shibata K."/>
            <person name="Shiraki T."/>
            <person name="Suzuki S."/>
            <person name="Tagami M."/>
            <person name="Waki K."/>
            <person name="Watahiki A."/>
            <person name="Okamura-Oho Y."/>
            <person name="Suzuki H."/>
            <person name="Kawai J."/>
            <person name="Hayashizaki Y."/>
        </authorList>
    </citation>
    <scope>NUCLEOTIDE SEQUENCE [LARGE SCALE MRNA]</scope>
    <source>
        <strain>C57BL/6J</strain>
        <tissue>Embryo</tissue>
        <tissue>Head</tissue>
    </source>
</reference>
<reference key="2">
    <citation type="journal article" date="2009" name="PLoS Biol.">
        <title>Lineage-specific biology revealed by a finished genome assembly of the mouse.</title>
        <authorList>
            <person name="Church D.M."/>
            <person name="Goodstadt L."/>
            <person name="Hillier L.W."/>
            <person name="Zody M.C."/>
            <person name="Goldstein S."/>
            <person name="She X."/>
            <person name="Bult C.J."/>
            <person name="Agarwala R."/>
            <person name="Cherry J.L."/>
            <person name="DiCuccio M."/>
            <person name="Hlavina W."/>
            <person name="Kapustin Y."/>
            <person name="Meric P."/>
            <person name="Maglott D."/>
            <person name="Birtle Z."/>
            <person name="Marques A.C."/>
            <person name="Graves T."/>
            <person name="Zhou S."/>
            <person name="Teague B."/>
            <person name="Potamousis K."/>
            <person name="Churas C."/>
            <person name="Place M."/>
            <person name="Herschleb J."/>
            <person name="Runnheim R."/>
            <person name="Forrest D."/>
            <person name="Amos-Landgraf J."/>
            <person name="Schwartz D.C."/>
            <person name="Cheng Z."/>
            <person name="Lindblad-Toh K."/>
            <person name="Eichler E.E."/>
            <person name="Ponting C.P."/>
        </authorList>
    </citation>
    <scope>NUCLEOTIDE SEQUENCE [LARGE SCALE GENOMIC DNA]</scope>
    <source>
        <strain>C57BL/6J</strain>
    </source>
</reference>
<reference key="3">
    <citation type="journal article" date="2004" name="Genome Res.">
        <title>The status, quality, and expansion of the NIH full-length cDNA project: the Mammalian Gene Collection (MGC).</title>
        <authorList>
            <consortium name="The MGC Project Team"/>
        </authorList>
    </citation>
    <scope>NUCLEOTIDE SEQUENCE [LARGE SCALE MRNA]</scope>
    <source>
        <strain>C57BL/6J</strain>
        <tissue>Mammary gland</tissue>
    </source>
</reference>
<gene>
    <name evidence="4" type="primary">Mrnip</name>
</gene>
<comment type="function">
    <text evidence="1">Plays a role in the cellular response to DNA damage and the maintenance of genome stability through its association with the MRN damage-sensing complex. Promotes chromatin loading and activity of the MRN complex to facilitate subsequent ATM-mediated DNA damage response signaling and DNA repair.</text>
</comment>
<comment type="subunit">
    <text evidence="1">Associates with the MRE11-RAD50-NBN (MRN) damage-sensing complex; this association is constitutive. Interacts with MRE11. Interacts with NBN. Interacts with RAD50.</text>
</comment>
<comment type="subcellular location">
    <subcellularLocation>
        <location evidence="1">Nucleus</location>
    </subcellularLocation>
    <subcellularLocation>
        <location evidence="1">Nucleus</location>
        <location evidence="1">Nucleoplasm</location>
    </subcellularLocation>
    <text evidence="1">Recruited to sites of DNA damage. Phosphorylation induces its nuclear localization and promotes genome stability.</text>
</comment>
<comment type="PTM">
    <text evidence="1">Phosphorylated; phosphorylation is constitutive and occurs in the absence of any DNA-damaging stimulus. Phosphorylation is necessary for its nuclear retention.</text>
</comment>
<comment type="similarity">
    <text evidence="3">Belongs to the MRNIP family.</text>
</comment>
<dbReference type="EMBL" id="AK003636">
    <property type="protein sequence ID" value="BAB22904.1"/>
    <property type="molecule type" value="mRNA"/>
</dbReference>
<dbReference type="EMBL" id="AK019392">
    <property type="protein sequence ID" value="BAB31698.1"/>
    <property type="molecule type" value="mRNA"/>
</dbReference>
<dbReference type="EMBL" id="AL627187">
    <property type="status" value="NOT_ANNOTATED_CDS"/>
    <property type="molecule type" value="Genomic_DNA"/>
</dbReference>
<dbReference type="EMBL" id="BC028428">
    <property type="protein sequence ID" value="AAH28428.1"/>
    <property type="molecule type" value="mRNA"/>
</dbReference>
<dbReference type="CCDS" id="CCDS48784.1"/>
<dbReference type="RefSeq" id="NP_080819.2">
    <property type="nucleotide sequence ID" value="NM_026543.3"/>
</dbReference>
<dbReference type="FunCoup" id="Q9D1F5">
    <property type="interactions" value="1320"/>
</dbReference>
<dbReference type="STRING" id="10090.ENSMUSP00000020647"/>
<dbReference type="GlyGen" id="Q9D1F5">
    <property type="glycosylation" value="1 site, 1 N-linked glycan (1 site)"/>
</dbReference>
<dbReference type="iPTMnet" id="Q9D1F5"/>
<dbReference type="PhosphoSitePlus" id="Q9D1F5"/>
<dbReference type="PaxDb" id="10090-ENSMUSP00000020647"/>
<dbReference type="PeptideAtlas" id="Q9D1F5"/>
<dbReference type="ProteomicsDB" id="290319"/>
<dbReference type="Pumba" id="Q9D1F5"/>
<dbReference type="Antibodypedia" id="62814">
    <property type="antibodies" value="104 antibodies from 12 providers"/>
</dbReference>
<dbReference type="Ensembl" id="ENSMUST00000020647.10">
    <property type="protein sequence ID" value="ENSMUSP00000020647.4"/>
    <property type="gene ID" value="ENSMUSG00000020381.11"/>
</dbReference>
<dbReference type="GeneID" id="68067"/>
<dbReference type="KEGG" id="mmu:68067"/>
<dbReference type="UCSC" id="uc007irv.2">
    <property type="organism name" value="mouse"/>
</dbReference>
<dbReference type="AGR" id="MGI:1915317"/>
<dbReference type="CTD" id="51149"/>
<dbReference type="MGI" id="MGI:1915317">
    <property type="gene designation" value="Mrnip"/>
</dbReference>
<dbReference type="VEuPathDB" id="HostDB:ENSMUSG00000020381"/>
<dbReference type="eggNOG" id="ENOG502S8YD">
    <property type="taxonomic scope" value="Eukaryota"/>
</dbReference>
<dbReference type="GeneTree" id="ENSGT00390000006124"/>
<dbReference type="HOGENOM" id="CLU_068693_0_0_1"/>
<dbReference type="InParanoid" id="Q9D1F5"/>
<dbReference type="OMA" id="GHQQAEN"/>
<dbReference type="OrthoDB" id="79217at9989"/>
<dbReference type="PhylomeDB" id="Q9D1F5"/>
<dbReference type="TreeFam" id="TF333430"/>
<dbReference type="BioGRID-ORCS" id="68067">
    <property type="hits" value="5 hits in 76 CRISPR screens"/>
</dbReference>
<dbReference type="ChiTaRS" id="Mrnip">
    <property type="organism name" value="mouse"/>
</dbReference>
<dbReference type="PRO" id="PR:Q9D1F5"/>
<dbReference type="Proteomes" id="UP000000589">
    <property type="component" value="Chromosome 11"/>
</dbReference>
<dbReference type="RNAct" id="Q9D1F5">
    <property type="molecule type" value="protein"/>
</dbReference>
<dbReference type="Bgee" id="ENSMUSG00000020381">
    <property type="expression patterns" value="Expressed in animal zygote and 145 other cell types or tissues"/>
</dbReference>
<dbReference type="ExpressionAtlas" id="Q9D1F5">
    <property type="expression patterns" value="baseline and differential"/>
</dbReference>
<dbReference type="GO" id="GO:0030870">
    <property type="term" value="C:Mre11 complex"/>
    <property type="evidence" value="ECO:0007669"/>
    <property type="project" value="Ensembl"/>
</dbReference>
<dbReference type="GO" id="GO:0005654">
    <property type="term" value="C:nucleoplasm"/>
    <property type="evidence" value="ECO:0000250"/>
    <property type="project" value="UniProtKB"/>
</dbReference>
<dbReference type="GO" id="GO:0005634">
    <property type="term" value="C:nucleus"/>
    <property type="evidence" value="ECO:0000250"/>
    <property type="project" value="UniProtKB"/>
</dbReference>
<dbReference type="GO" id="GO:0003682">
    <property type="term" value="F:chromatin binding"/>
    <property type="evidence" value="ECO:0000250"/>
    <property type="project" value="UniProtKB"/>
</dbReference>
<dbReference type="GO" id="GO:0006974">
    <property type="term" value="P:DNA damage response"/>
    <property type="evidence" value="ECO:0000250"/>
    <property type="project" value="UniProtKB"/>
</dbReference>
<dbReference type="GO" id="GO:0006281">
    <property type="term" value="P:DNA repair"/>
    <property type="evidence" value="ECO:0007669"/>
    <property type="project" value="UniProtKB-KW"/>
</dbReference>
<dbReference type="GO" id="GO:0007095">
    <property type="term" value="P:mitotic G2 DNA damage checkpoint signaling"/>
    <property type="evidence" value="ECO:0000250"/>
    <property type="project" value="UniProtKB"/>
</dbReference>
<dbReference type="GO" id="GO:1905168">
    <property type="term" value="P:positive regulation of double-strand break repair via homologous recombination"/>
    <property type="evidence" value="ECO:0000250"/>
    <property type="project" value="UniProtKB"/>
</dbReference>
<dbReference type="GO" id="GO:0045860">
    <property type="term" value="P:positive regulation of protein kinase activity"/>
    <property type="evidence" value="ECO:0000250"/>
    <property type="project" value="UniProtKB"/>
</dbReference>
<dbReference type="GO" id="GO:0071168">
    <property type="term" value="P:protein localization to chromatin"/>
    <property type="evidence" value="ECO:0000250"/>
    <property type="project" value="UniProtKB"/>
</dbReference>
<dbReference type="GO" id="GO:2001032">
    <property type="term" value="P:regulation of double-strand break repair via nonhomologous end joining"/>
    <property type="evidence" value="ECO:0000250"/>
    <property type="project" value="UniProtKB"/>
</dbReference>
<dbReference type="GO" id="GO:0010212">
    <property type="term" value="P:response to ionizing radiation"/>
    <property type="evidence" value="ECO:0000250"/>
    <property type="project" value="UniProtKB"/>
</dbReference>
<dbReference type="InterPro" id="IPR032739">
    <property type="entry name" value="MRNIP"/>
</dbReference>
<dbReference type="InterPro" id="IPR049472">
    <property type="entry name" value="MRNIP_N"/>
</dbReference>
<dbReference type="PANTHER" id="PTHR15863">
    <property type="entry name" value="MRN COMPLEX-INTERACTING PROTEIN"/>
    <property type="match status" value="1"/>
</dbReference>
<dbReference type="PANTHER" id="PTHR15863:SF2">
    <property type="entry name" value="MRN COMPLEX-INTERACTING PROTEIN"/>
    <property type="match status" value="1"/>
</dbReference>
<dbReference type="Pfam" id="PF15749">
    <property type="entry name" value="MRNIP"/>
    <property type="match status" value="1"/>
</dbReference>